<comment type="function">
    <text>Kinase that can phosphorylate various inositol polyphosphate such as Ins(3,4,5,6)P4 or Ins(1,3,4)P3. Phosphorylates Ins(3,4,5,6)P4 at position 1 to form Ins(1,3,4,5,6)P5. This reaction is thought to have regulatory importance, since Ins(3,4,5,6)P4 is an inhibitor of plasma membrane Ca(2+)-activated Cl(-) channels, while Ins(1,3,4,5,6)P5 is not. Also phosphorylates Ins(1,3,4)P3 on O-5 and O-6 to form Ins(1,3,4,6)P4, an essential molecule in the hexakisphosphate (InsP6) pathway. May also act as an isomerase that interconverts the inositol tetrakisphosphate isomers Ins(1,3,4,5)P4 and Ins(1,3,4,6)P4 in the presence of ADP and magnesium.</text>
</comment>
<comment type="catalytic activity">
    <reaction evidence="2">
        <text>1D-myo-inositol 3,4,5,6-tetrakisphosphate + ATP = 1D-myo-inositol 1,3,4,5,6-pentakisphosphate + ADP + H(+)</text>
        <dbReference type="Rhea" id="RHEA:12452"/>
        <dbReference type="ChEBI" id="CHEBI:15378"/>
        <dbReference type="ChEBI" id="CHEBI:30616"/>
        <dbReference type="ChEBI" id="CHEBI:57539"/>
        <dbReference type="ChEBI" id="CHEBI:57733"/>
        <dbReference type="ChEBI" id="CHEBI:456216"/>
        <dbReference type="EC" id="2.7.1.134"/>
    </reaction>
</comment>
<comment type="catalytic activity">
    <reaction evidence="2">
        <text>1D-myo-inositol 1,3,4-trisphosphate + ATP = 1D-myo-inositol 1,3,4,5-tetrakisphosphate + ADP + H(+)</text>
        <dbReference type="Rhea" id="RHEA:13253"/>
        <dbReference type="ChEBI" id="CHEBI:15378"/>
        <dbReference type="ChEBI" id="CHEBI:30616"/>
        <dbReference type="ChEBI" id="CHEBI:57895"/>
        <dbReference type="ChEBI" id="CHEBI:58414"/>
        <dbReference type="ChEBI" id="CHEBI:456216"/>
        <dbReference type="EC" id="2.7.1.159"/>
    </reaction>
</comment>
<comment type="catalytic activity">
    <reaction evidence="2">
        <text>1D-myo-inositol 1,3,4-trisphosphate + ATP = 1D-myo-inositol 1,3,4,6-tetrakisphosphate + ADP + H(+)</text>
        <dbReference type="Rhea" id="RHEA:20940"/>
        <dbReference type="ChEBI" id="CHEBI:15378"/>
        <dbReference type="ChEBI" id="CHEBI:30616"/>
        <dbReference type="ChEBI" id="CHEBI:57660"/>
        <dbReference type="ChEBI" id="CHEBI:58414"/>
        <dbReference type="ChEBI" id="CHEBI:456216"/>
        <dbReference type="EC" id="2.7.1.159"/>
    </reaction>
</comment>
<comment type="cofactor">
    <cofactor evidence="3 6 7 8">
        <name>Mg(2+)</name>
        <dbReference type="ChEBI" id="CHEBI:18420"/>
    </cofactor>
    <text evidence="3 6 7 8">Binds 2 magnesium ions per subunit.</text>
</comment>
<comment type="subunit">
    <text evidence="3">Monomer.</text>
</comment>
<comment type="similarity">
    <text evidence="4">Belongs to the ITPK1 family.</text>
</comment>
<name>ITPK1_ENTH1</name>
<feature type="chain" id="PRO_0000220838" description="Inositol-tetrakisphosphate 1-kinase">
    <location>
        <begin position="1"/>
        <end position="319"/>
    </location>
</feature>
<feature type="domain" description="ATP-grasp" evidence="1">
    <location>
        <begin position="98"/>
        <end position="317"/>
    </location>
</feature>
<feature type="binding site" evidence="3 7">
    <location>
        <position position="17"/>
    </location>
    <ligand>
        <name>1D-myo-inositol 1,3,4,6-tetrakisphosphate</name>
        <dbReference type="ChEBI" id="CHEBI:57660"/>
    </ligand>
</feature>
<feature type="binding site" evidence="3 8">
    <location>
        <position position="17"/>
    </location>
    <ligand>
        <name>1D-myo-inositol 1,3,4-trisphosphate</name>
        <dbReference type="ChEBI" id="CHEBI:58414"/>
    </ligand>
</feature>
<feature type="binding site" evidence="3 7">
    <location>
        <position position="57"/>
    </location>
    <ligand>
        <name>1D-myo-inositol 1,3,4,6-tetrakisphosphate</name>
        <dbReference type="ChEBI" id="CHEBI:57660"/>
    </ligand>
</feature>
<feature type="binding site" evidence="3 6 7">
    <location>
        <position position="94"/>
    </location>
    <ligand>
        <name>ADP</name>
        <dbReference type="ChEBI" id="CHEBI:456216"/>
    </ligand>
</feature>
<feature type="binding site" evidence="5 8">
    <location>
        <position position="94"/>
    </location>
    <ligand>
        <name>ATP</name>
        <dbReference type="ChEBI" id="CHEBI:30616"/>
    </ligand>
</feature>
<feature type="binding site" evidence="3 6 7">
    <location>
        <position position="136"/>
    </location>
    <ligand>
        <name>ADP</name>
        <dbReference type="ChEBI" id="CHEBI:456216"/>
    </ligand>
</feature>
<feature type="binding site" evidence="5 8">
    <location>
        <position position="136"/>
    </location>
    <ligand>
        <name>ATP</name>
        <dbReference type="ChEBI" id="CHEBI:30616"/>
    </ligand>
</feature>
<feature type="binding site" evidence="3 7">
    <location>
        <position position="141"/>
    </location>
    <ligand>
        <name>1D-myo-inositol 1,3,4,6-tetrakisphosphate</name>
        <dbReference type="ChEBI" id="CHEBI:57660"/>
    </ligand>
</feature>
<feature type="binding site" evidence="3 8">
    <location>
        <position position="141"/>
    </location>
    <ligand>
        <name>1D-myo-inositol 1,3,4-trisphosphate</name>
        <dbReference type="ChEBI" id="CHEBI:58414"/>
    </ligand>
</feature>
<feature type="binding site" evidence="3 7">
    <location>
        <position position="142"/>
    </location>
    <ligand>
        <name>1D-myo-inositol 1,3,4,6-tetrakisphosphate</name>
        <dbReference type="ChEBI" id="CHEBI:57660"/>
    </ligand>
</feature>
<feature type="binding site" evidence="3 8">
    <location>
        <position position="142"/>
    </location>
    <ligand>
        <name>1D-myo-inositol 1,3,4-trisphosphate</name>
        <dbReference type="ChEBI" id="CHEBI:58414"/>
    </ligand>
</feature>
<feature type="binding site" evidence="3 7">
    <location>
        <position position="147"/>
    </location>
    <ligand>
        <name>1D-myo-inositol 1,3,4,6-tetrakisphosphate</name>
        <dbReference type="ChEBI" id="CHEBI:57660"/>
    </ligand>
</feature>
<feature type="binding site" evidence="3 8">
    <location>
        <position position="147"/>
    </location>
    <ligand>
        <name>1D-myo-inositol 1,3,4-trisphosphate</name>
        <dbReference type="ChEBI" id="CHEBI:58414"/>
    </ligand>
</feature>
<feature type="binding site" evidence="3 6 7">
    <location>
        <position position="147"/>
    </location>
    <ligand>
        <name>ADP</name>
        <dbReference type="ChEBI" id="CHEBI:456216"/>
    </ligand>
</feature>
<feature type="binding site" evidence="5 8">
    <location>
        <position position="147"/>
    </location>
    <ligand>
        <name>ATP</name>
        <dbReference type="ChEBI" id="CHEBI:30616"/>
    </ligand>
</feature>
<feature type="binding site" evidence="3 6 7">
    <location>
        <position position="168"/>
    </location>
    <ligand>
        <name>ADP</name>
        <dbReference type="ChEBI" id="CHEBI:456216"/>
    </ligand>
</feature>
<feature type="binding site" evidence="5 8">
    <location>
        <position position="168"/>
    </location>
    <ligand>
        <name>ATP</name>
        <dbReference type="ChEBI" id="CHEBI:30616"/>
    </ligand>
</feature>
<feature type="binding site" evidence="3 6 7">
    <location>
        <position position="169"/>
    </location>
    <ligand>
        <name>ADP</name>
        <dbReference type="ChEBI" id="CHEBI:456216"/>
    </ligand>
</feature>
<feature type="binding site" evidence="5 8">
    <location>
        <position position="169"/>
    </location>
    <ligand>
        <name>ATP</name>
        <dbReference type="ChEBI" id="CHEBI:30616"/>
    </ligand>
</feature>
<feature type="binding site" evidence="3 6 7">
    <location>
        <position position="170"/>
    </location>
    <ligand>
        <name>ADP</name>
        <dbReference type="ChEBI" id="CHEBI:456216"/>
    </ligand>
</feature>
<feature type="binding site" evidence="5 8">
    <location>
        <position position="170"/>
    </location>
    <ligand>
        <name>ATP</name>
        <dbReference type="ChEBI" id="CHEBI:30616"/>
    </ligand>
</feature>
<feature type="binding site" evidence="3 6 7">
    <location>
        <position position="171"/>
    </location>
    <ligand>
        <name>ADP</name>
        <dbReference type="ChEBI" id="CHEBI:456216"/>
    </ligand>
</feature>
<feature type="binding site" evidence="5 8">
    <location>
        <position position="171"/>
    </location>
    <ligand>
        <name>ATP</name>
        <dbReference type="ChEBI" id="CHEBI:30616"/>
    </ligand>
</feature>
<feature type="binding site" evidence="3 7">
    <location>
        <position position="179"/>
    </location>
    <ligand>
        <name>1D-myo-inositol 1,3,4,6-tetrakisphosphate</name>
        <dbReference type="ChEBI" id="CHEBI:57660"/>
    </ligand>
</feature>
<feature type="binding site" evidence="3 6 7">
    <location>
        <position position="194"/>
    </location>
    <ligand>
        <name>ADP</name>
        <dbReference type="ChEBI" id="CHEBI:456216"/>
    </ligand>
</feature>
<feature type="binding site" evidence="5 8">
    <location>
        <position position="194"/>
    </location>
    <ligand>
        <name>ATP</name>
        <dbReference type="ChEBI" id="CHEBI:30616"/>
    </ligand>
</feature>
<feature type="binding site" evidence="3 6">
    <location>
        <position position="210"/>
    </location>
    <ligand>
        <name>ADP</name>
        <dbReference type="ChEBI" id="CHEBI:456216"/>
    </ligand>
</feature>
<feature type="binding site" evidence="3 6 7 8">
    <location>
        <position position="275"/>
    </location>
    <ligand>
        <name>Mg(2+)</name>
        <dbReference type="ChEBI" id="CHEBI:18420"/>
        <label>1</label>
    </ligand>
</feature>
<feature type="binding site" evidence="3 7">
    <location>
        <position position="288"/>
    </location>
    <ligand>
        <name>ADP</name>
        <dbReference type="ChEBI" id="CHEBI:456216"/>
    </ligand>
</feature>
<feature type="binding site" evidence="5 8">
    <location>
        <position position="288"/>
    </location>
    <ligand>
        <name>ATP</name>
        <dbReference type="ChEBI" id="CHEBI:30616"/>
    </ligand>
</feature>
<feature type="binding site" evidence="3 7">
    <location>
        <position position="289"/>
    </location>
    <ligand>
        <name>1D-myo-inositol 1,3,4,6-tetrakisphosphate</name>
        <dbReference type="ChEBI" id="CHEBI:57660"/>
    </ligand>
</feature>
<feature type="binding site" evidence="3 6 7">
    <location>
        <position position="289"/>
    </location>
    <ligand>
        <name>ADP</name>
        <dbReference type="ChEBI" id="CHEBI:456216"/>
    </ligand>
</feature>
<feature type="binding site" evidence="5 8">
    <location>
        <position position="289"/>
    </location>
    <ligand>
        <name>ATP</name>
        <dbReference type="ChEBI" id="CHEBI:30616"/>
    </ligand>
</feature>
<feature type="binding site" evidence="3 6 7 8">
    <location>
        <position position="289"/>
    </location>
    <ligand>
        <name>Mg(2+)</name>
        <dbReference type="ChEBI" id="CHEBI:18420"/>
        <label>1</label>
    </ligand>
</feature>
<feature type="binding site" evidence="3 7 8">
    <location>
        <position position="289"/>
    </location>
    <ligand>
        <name>Mg(2+)</name>
        <dbReference type="ChEBI" id="CHEBI:18420"/>
        <label>2</label>
    </ligand>
</feature>
<feature type="binding site" evidence="3 7">
    <location>
        <position position="291"/>
    </location>
    <ligand>
        <name>1D-myo-inositol 1,3,4,6-tetrakisphosphate</name>
        <dbReference type="ChEBI" id="CHEBI:57660"/>
    </ligand>
</feature>
<feature type="binding site" evidence="3 8">
    <location>
        <position position="291"/>
    </location>
    <ligand>
        <name>1D-myo-inositol 1,3,4-trisphosphate</name>
        <dbReference type="ChEBI" id="CHEBI:58414"/>
    </ligand>
</feature>
<feature type="binding site" evidence="5 8">
    <location>
        <position position="291"/>
    </location>
    <ligand>
        <name>ATP</name>
        <dbReference type="ChEBI" id="CHEBI:30616"/>
    </ligand>
</feature>
<feature type="binding site" evidence="3 7 8">
    <location>
        <position position="291"/>
    </location>
    <ligand>
        <name>Mg(2+)</name>
        <dbReference type="ChEBI" id="CHEBI:18420"/>
        <label>2</label>
    </ligand>
</feature>
<feature type="binding site" evidence="3 7">
    <location>
        <position position="295"/>
    </location>
    <ligand>
        <name>1D-myo-inositol 1,3,4,6-tetrakisphosphate</name>
        <dbReference type="ChEBI" id="CHEBI:57660"/>
    </ligand>
</feature>
<feature type="binding site" evidence="3 8">
    <location>
        <position position="295"/>
    </location>
    <ligand>
        <name>1D-myo-inositol 1,3,4-trisphosphate</name>
        <dbReference type="ChEBI" id="CHEBI:58414"/>
    </ligand>
</feature>
<feature type="strand" evidence="9">
    <location>
        <begin position="6"/>
        <end position="12"/>
    </location>
</feature>
<feature type="helix" evidence="9">
    <location>
        <begin position="15"/>
        <end position="21"/>
    </location>
</feature>
<feature type="strand" evidence="9">
    <location>
        <begin position="22"/>
        <end position="24"/>
    </location>
</feature>
<feature type="strand" evidence="9">
    <location>
        <begin position="27"/>
        <end position="33"/>
    </location>
</feature>
<feature type="strand" evidence="9">
    <location>
        <begin position="36"/>
        <end position="45"/>
    </location>
</feature>
<feature type="strand" evidence="9">
    <location>
        <begin position="52"/>
        <end position="56"/>
    </location>
</feature>
<feature type="strand" evidence="9">
    <location>
        <begin position="61"/>
        <end position="63"/>
    </location>
</feature>
<feature type="helix" evidence="9">
    <location>
        <begin position="64"/>
        <end position="75"/>
    </location>
</feature>
<feature type="strand" evidence="9">
    <location>
        <begin position="79"/>
        <end position="82"/>
    </location>
</feature>
<feature type="helix" evidence="9">
    <location>
        <begin position="85"/>
        <end position="91"/>
    </location>
</feature>
<feature type="helix" evidence="9">
    <location>
        <begin position="94"/>
        <end position="103"/>
    </location>
</feature>
<feature type="strand" evidence="9">
    <location>
        <begin position="111"/>
        <end position="116"/>
    </location>
</feature>
<feature type="helix" evidence="9">
    <location>
        <begin position="117"/>
        <end position="125"/>
    </location>
</feature>
<feature type="strand" evidence="9">
    <location>
        <begin position="131"/>
        <end position="139"/>
    </location>
</feature>
<feature type="strand" evidence="9">
    <location>
        <begin position="141"/>
        <end position="144"/>
    </location>
</feature>
<feature type="helix" evidence="9">
    <location>
        <begin position="145"/>
        <end position="147"/>
    </location>
</feature>
<feature type="strand" evidence="9">
    <location>
        <begin position="148"/>
        <end position="152"/>
    </location>
</feature>
<feature type="helix" evidence="9">
    <location>
        <begin position="155"/>
        <end position="158"/>
    </location>
</feature>
<feature type="strand" evidence="9">
    <location>
        <begin position="163"/>
        <end position="169"/>
    </location>
</feature>
<feature type="strand" evidence="9">
    <location>
        <begin position="177"/>
        <end position="183"/>
    </location>
</feature>
<feature type="strand" evidence="9">
    <location>
        <begin position="186"/>
        <end position="192"/>
    </location>
</feature>
<feature type="strand" evidence="9">
    <location>
        <begin position="205"/>
        <end position="209"/>
    </location>
</feature>
<feature type="helix" evidence="9">
    <location>
        <begin position="213"/>
        <end position="218"/>
    </location>
</feature>
<feature type="helix" evidence="9">
    <location>
        <begin position="226"/>
        <end position="233"/>
    </location>
</feature>
<feature type="turn" evidence="9">
    <location>
        <begin position="234"/>
        <end position="237"/>
    </location>
</feature>
<feature type="turn" evidence="9">
    <location>
        <begin position="245"/>
        <end position="249"/>
    </location>
</feature>
<feature type="helix" evidence="9">
    <location>
        <begin position="253"/>
        <end position="267"/>
    </location>
</feature>
<feature type="strand" evidence="9">
    <location>
        <begin position="270"/>
        <end position="277"/>
    </location>
</feature>
<feature type="helix" evidence="9">
    <location>
        <begin position="279"/>
        <end position="281"/>
    </location>
</feature>
<feature type="strand" evidence="9">
    <location>
        <begin position="286"/>
        <end position="293"/>
    </location>
</feature>
<feature type="strand" evidence="10">
    <location>
        <begin position="298"/>
        <end position="300"/>
    </location>
</feature>
<feature type="helix" evidence="9">
    <location>
        <begin position="302"/>
        <end position="314"/>
    </location>
</feature>
<keyword id="KW-0002">3D-structure</keyword>
<keyword id="KW-0067">ATP-binding</keyword>
<keyword id="KW-0413">Isomerase</keyword>
<keyword id="KW-0418">Kinase</keyword>
<keyword id="KW-0460">Magnesium</keyword>
<keyword id="KW-0479">Metal-binding</keyword>
<keyword id="KW-0547">Nucleotide-binding</keyword>
<keyword id="KW-1185">Reference proteome</keyword>
<keyword id="KW-0808">Transferase</keyword>
<proteinExistence type="evidence at protein level"/>
<sequence length="319" mass="36480">MTTKQTVSLFIWLPESKQKTLFISTKNHTQFELNNIIFDVTLSTELPDKEPNAIITKRTHPVGKMADEMRKYEKDHPKVLFLESSAIHDMMSSREEINALLIKNNIPIPNSFSVKSKEEVIQLLQSKQLILPFIVKPENAQGTFNAHQMKIVLEQEGIDDIHFPCLCQHYINHNNKIVKVFCIGNTLKWQTRTSLPNVHRCGIKSVDFNNQHLEDILSWPEGVIDKQDIIENSANRFGSKILEDPILLNLTSEAEMRDLAYKVRCALGVQLCGIDFIKENEQGNPLVVDVNVFPSYGGKVDFDWFVEKVALCYTEVAKI</sequence>
<protein>
    <recommendedName>
        <fullName>Inositol-tetrakisphosphate 1-kinase</fullName>
        <ecNumber>2.7.1.134</ecNumber>
    </recommendedName>
    <alternativeName>
        <fullName>Inositol 1,3,4-trisphosphate 5/6-kinase</fullName>
        <shortName>Inositol-triphosphate 5/6-kinase</shortName>
        <shortName>Ins(1,3,4)P(3) 5/6-kinase</shortName>
        <ecNumber>2.7.1.159</ecNumber>
    </alternativeName>
</protein>
<gene>
    <name type="primary">ITPK1</name>
    <name type="ORF">151.t00008</name>
</gene>
<organism>
    <name type="scientific">Entamoeba histolytica (strain ATCC 30459 / HM-1:IMSS / ABRM)</name>
    <dbReference type="NCBI Taxonomy" id="294381"/>
    <lineage>
        <taxon>Eukaryota</taxon>
        <taxon>Amoebozoa</taxon>
        <taxon>Evosea</taxon>
        <taxon>Archamoebae</taxon>
        <taxon>Mastigamoebida</taxon>
        <taxon>Entamoebidae</taxon>
        <taxon>Entamoeba</taxon>
    </lineage>
</organism>
<dbReference type="EC" id="2.7.1.134"/>
<dbReference type="EC" id="2.7.1.159"/>
<dbReference type="EMBL" id="AF118848">
    <property type="protein sequence ID" value="AAD22969.1"/>
    <property type="molecule type" value="Genomic_DNA"/>
</dbReference>
<dbReference type="EMBL" id="DS571201">
    <property type="protein sequence ID" value="EAL46318.1"/>
    <property type="molecule type" value="Genomic_DNA"/>
</dbReference>
<dbReference type="RefSeq" id="XP_651704.1">
    <property type="nucleotide sequence ID" value="XM_646612.1"/>
</dbReference>
<dbReference type="PDB" id="1Z2N">
    <property type="method" value="X-ray"/>
    <property type="resolution" value="1.20 A"/>
    <property type="chains" value="X=1-319"/>
</dbReference>
<dbReference type="PDB" id="1Z2O">
    <property type="method" value="X-ray"/>
    <property type="resolution" value="1.24 A"/>
    <property type="chains" value="X=1-319"/>
</dbReference>
<dbReference type="PDB" id="1Z2P">
    <property type="method" value="X-ray"/>
    <property type="resolution" value="1.22 A"/>
    <property type="chains" value="X=1-319"/>
</dbReference>
<dbReference type="PDBsum" id="1Z2N"/>
<dbReference type="PDBsum" id="1Z2O"/>
<dbReference type="PDBsum" id="1Z2P"/>
<dbReference type="SMR" id="Q9XYQ1"/>
<dbReference type="STRING" id="5759.Q9XYQ1"/>
<dbReference type="GeneID" id="3406022"/>
<dbReference type="KEGG" id="ehi:EHI_100310"/>
<dbReference type="VEuPathDB" id="AmoebaDB:EHI5A_055940"/>
<dbReference type="VEuPathDB" id="AmoebaDB:EHI7A_038980"/>
<dbReference type="VEuPathDB" id="AmoebaDB:EHI8A_037840"/>
<dbReference type="VEuPathDB" id="AmoebaDB:EHI_100310"/>
<dbReference type="VEuPathDB" id="AmoebaDB:KM1_069380"/>
<dbReference type="eggNOG" id="ENOG502RD8I">
    <property type="taxonomic scope" value="Eukaryota"/>
</dbReference>
<dbReference type="InParanoid" id="Q9XYQ1"/>
<dbReference type="OMA" id="CIIHKLH"/>
<dbReference type="OrthoDB" id="25308at2759"/>
<dbReference type="BRENDA" id="2.7.1.159">
    <property type="organism ID" value="2080"/>
</dbReference>
<dbReference type="EvolutionaryTrace" id="Q9XYQ1"/>
<dbReference type="Proteomes" id="UP000001926">
    <property type="component" value="Partially assembled WGS sequence"/>
</dbReference>
<dbReference type="GO" id="GO:0005524">
    <property type="term" value="F:ATP binding"/>
    <property type="evidence" value="ECO:0007669"/>
    <property type="project" value="UniProtKB-KW"/>
</dbReference>
<dbReference type="GO" id="GO:0052726">
    <property type="term" value="F:inositol-1,3,4-trisphosphate 5-kinase activity"/>
    <property type="evidence" value="ECO:0000318"/>
    <property type="project" value="GO_Central"/>
</dbReference>
<dbReference type="GO" id="GO:0052725">
    <property type="term" value="F:inositol-1,3,4-trisphosphate 6-kinase activity"/>
    <property type="evidence" value="ECO:0000318"/>
    <property type="project" value="GO_Central"/>
</dbReference>
<dbReference type="GO" id="GO:0047325">
    <property type="term" value="F:inositol-3,4,5,6-tetrakisphosphate 1-kinase activity"/>
    <property type="evidence" value="ECO:0000318"/>
    <property type="project" value="GO_Central"/>
</dbReference>
<dbReference type="GO" id="GO:0016853">
    <property type="term" value="F:isomerase activity"/>
    <property type="evidence" value="ECO:0007669"/>
    <property type="project" value="UniProtKB-KW"/>
</dbReference>
<dbReference type="GO" id="GO:0000287">
    <property type="term" value="F:magnesium ion binding"/>
    <property type="evidence" value="ECO:0007669"/>
    <property type="project" value="InterPro"/>
</dbReference>
<dbReference type="GO" id="GO:0032957">
    <property type="term" value="P:inositol trisphosphate metabolic process"/>
    <property type="evidence" value="ECO:0007669"/>
    <property type="project" value="InterPro"/>
</dbReference>
<dbReference type="Gene3D" id="3.30.1490.220">
    <property type="match status" value="1"/>
</dbReference>
<dbReference type="Gene3D" id="3.30.470.20">
    <property type="entry name" value="ATP-grasp fold, B domain"/>
    <property type="match status" value="1"/>
</dbReference>
<dbReference type="Gene3D" id="3.40.50.10820">
    <property type="entry name" value="Inositol 1,3,4-trisphosphate 5/6-kinase domain"/>
    <property type="match status" value="1"/>
</dbReference>
<dbReference type="InterPro" id="IPR011761">
    <property type="entry name" value="ATP-grasp"/>
</dbReference>
<dbReference type="InterPro" id="IPR008656">
    <property type="entry name" value="Inositol_tetrakis-P_1-kinase"/>
</dbReference>
<dbReference type="InterPro" id="IPR040464">
    <property type="entry name" value="InsP(3)kin_ATP-grasp"/>
</dbReference>
<dbReference type="InterPro" id="IPR048629">
    <property type="entry name" value="ITPK1_preATP-grasp"/>
</dbReference>
<dbReference type="PANTHER" id="PTHR14217">
    <property type="entry name" value="INOSITOL-TETRAKISPHOSPHATE 1-KINASE"/>
    <property type="match status" value="1"/>
</dbReference>
<dbReference type="PANTHER" id="PTHR14217:SF1">
    <property type="entry name" value="INOSITOL-TETRAKISPHOSPHATE 1-KINASE"/>
    <property type="match status" value="1"/>
</dbReference>
<dbReference type="Pfam" id="PF05770">
    <property type="entry name" value="Ins134_P3_kin"/>
    <property type="match status" value="1"/>
</dbReference>
<dbReference type="Pfam" id="PF21512">
    <property type="entry name" value="ITPK1_preATP-grasp"/>
    <property type="match status" value="1"/>
</dbReference>
<dbReference type="PIRSF" id="PIRSF038186">
    <property type="entry name" value="ITPK"/>
    <property type="match status" value="1"/>
</dbReference>
<dbReference type="SUPFAM" id="SSF56059">
    <property type="entry name" value="Glutathione synthetase ATP-binding domain-like"/>
    <property type="match status" value="1"/>
</dbReference>
<dbReference type="PROSITE" id="PS50975">
    <property type="entry name" value="ATP_GRASP"/>
    <property type="match status" value="1"/>
</dbReference>
<reference key="1">
    <citation type="journal article" date="2000" name="Mol. Biochem. Parasitol.">
        <title>An Entamoeba histolytica inositol 1,3,4-trisphosphate 5/6-kinase has a novel 3-kinase activity.</title>
        <authorList>
            <person name="Field J."/>
            <person name="Wilson M.P."/>
            <person name="Mai Z."/>
            <person name="Majerus P.W."/>
            <person name="Samuelson J."/>
        </authorList>
    </citation>
    <scope>NUCLEOTIDE SEQUENCE [GENOMIC DNA]</scope>
    <scope>ENZYME ACTIVITY</scope>
    <source>
        <strain>ATCC 30459 / HM-1:IMSS / ABRM</strain>
    </source>
</reference>
<reference key="2">
    <citation type="journal article" date="2005" name="Nature">
        <title>The genome of the protist parasite Entamoeba histolytica.</title>
        <authorList>
            <person name="Loftus B.J."/>
            <person name="Anderson I."/>
            <person name="Davies R."/>
            <person name="Alsmark U.C."/>
            <person name="Samuelson J."/>
            <person name="Amedeo P."/>
            <person name="Roncaglia P."/>
            <person name="Berriman M."/>
            <person name="Hirt R.P."/>
            <person name="Mann B.J."/>
            <person name="Nozaki T."/>
            <person name="Suh B."/>
            <person name="Pop M."/>
            <person name="Duchene M."/>
            <person name="Ackers J."/>
            <person name="Tannich E."/>
            <person name="Leippe M."/>
            <person name="Hofer M."/>
            <person name="Bruchhaus I."/>
            <person name="Willhoeft U."/>
            <person name="Bhattacharya A."/>
            <person name="Chillingworth T."/>
            <person name="Churcher C.M."/>
            <person name="Hance Z."/>
            <person name="Harris B."/>
            <person name="Harris D."/>
            <person name="Jagels K."/>
            <person name="Moule S."/>
            <person name="Mungall K.L."/>
            <person name="Ormond D."/>
            <person name="Squares R."/>
            <person name="Whitehead S."/>
            <person name="Quail M.A."/>
            <person name="Rabbinowitsch E."/>
            <person name="Norbertczak H."/>
            <person name="Price C."/>
            <person name="Wang Z."/>
            <person name="Guillen N."/>
            <person name="Gilchrist C."/>
            <person name="Stroup S.E."/>
            <person name="Bhattacharya S."/>
            <person name="Lohia A."/>
            <person name="Foster P.G."/>
            <person name="Sicheritz-Ponten T."/>
            <person name="Weber C."/>
            <person name="Singh U."/>
            <person name="Mukherjee C."/>
            <person name="El-Sayed N.M.A."/>
            <person name="Petri W.A."/>
            <person name="Clark C.G."/>
            <person name="Embley T.M."/>
            <person name="Barrell B.G."/>
            <person name="Fraser C.M."/>
            <person name="Hall N."/>
        </authorList>
    </citation>
    <scope>NUCLEOTIDE SEQUENCE [LARGE SCALE GENOMIC DNA]</scope>
    <source>
        <strain>ATCC 30459 / HM-1:IMSS / ABRM</strain>
    </source>
</reference>
<reference key="3">
    <citation type="journal article" date="2010" name="PLoS Negl. Trop. Dis.">
        <title>New assembly, reannotation and analysis of the Entamoeba histolytica genome reveal new genomic features and protein content information.</title>
        <authorList>
            <person name="Lorenzi H.A."/>
            <person name="Puiu D."/>
            <person name="Miller J.R."/>
            <person name="Brinkac L.M."/>
            <person name="Amedeo P."/>
            <person name="Hall N."/>
            <person name="Caler E.V."/>
        </authorList>
    </citation>
    <scope>GENOME REANNOTATION</scope>
    <source>
        <strain>ATCC 30459 / HM-1:IMSS / ABRM</strain>
    </source>
</reference>
<reference key="4">
    <citation type="journal article" date="2005" name="Mol. Cell">
        <title>Specificity determinants in inositol polyphosphate synthesis: crystal structure of inositol 1,3,4-trisphosphate 5/6-kinase.</title>
        <authorList>
            <person name="Miller G.J."/>
            <person name="Wilson M.P."/>
            <person name="Majerus P.W."/>
            <person name="Hurley J.H."/>
        </authorList>
    </citation>
    <scope>X-RAY CRYSTALLOGRAPHY (1.2 ANGSTROMS) IN COMPLEX WITH MAGNESIUM; ADP; ATP ANALOG AND INOSITOL POLYPHOSPHATES</scope>
    <scope>SUBSTRATE SPECIFICITY</scope>
</reference>
<accession>Q9XYQ1</accession>
<accession>Q50XK5</accession>
<evidence type="ECO:0000255" key="1">
    <source>
        <dbReference type="PROSITE-ProRule" id="PRU00409"/>
    </source>
</evidence>
<evidence type="ECO:0000269" key="2">
    <source>
    </source>
</evidence>
<evidence type="ECO:0000269" key="3">
    <source>
    </source>
</evidence>
<evidence type="ECO:0000305" key="4"/>
<evidence type="ECO:0000305" key="5">
    <source>
    </source>
</evidence>
<evidence type="ECO:0007744" key="6">
    <source>
        <dbReference type="PDB" id="1Z2N"/>
    </source>
</evidence>
<evidence type="ECO:0007744" key="7">
    <source>
        <dbReference type="PDB" id="1Z2O"/>
    </source>
</evidence>
<evidence type="ECO:0007744" key="8">
    <source>
        <dbReference type="PDB" id="1Z2P"/>
    </source>
</evidence>
<evidence type="ECO:0007829" key="9">
    <source>
        <dbReference type="PDB" id="1Z2N"/>
    </source>
</evidence>
<evidence type="ECO:0007829" key="10">
    <source>
        <dbReference type="PDB" id="1Z2P"/>
    </source>
</evidence>